<organism>
    <name type="scientific">Salmonella paratyphi B (strain ATCC BAA-1250 / SPB7)</name>
    <dbReference type="NCBI Taxonomy" id="1016998"/>
    <lineage>
        <taxon>Bacteria</taxon>
        <taxon>Pseudomonadati</taxon>
        <taxon>Pseudomonadota</taxon>
        <taxon>Gammaproteobacteria</taxon>
        <taxon>Enterobacterales</taxon>
        <taxon>Enterobacteriaceae</taxon>
        <taxon>Salmonella</taxon>
    </lineage>
</organism>
<feature type="chain" id="PRO_1000149272" description="2-isopropylmalate synthase">
    <location>
        <begin position="1"/>
        <end position="523"/>
    </location>
</feature>
<feature type="domain" description="Pyruvate carboxyltransferase" evidence="1">
    <location>
        <begin position="5"/>
        <end position="267"/>
    </location>
</feature>
<feature type="region of interest" description="Regulatory domain" evidence="1">
    <location>
        <begin position="392"/>
        <end position="523"/>
    </location>
</feature>
<feature type="binding site" evidence="1">
    <location>
        <position position="14"/>
    </location>
    <ligand>
        <name>Mn(2+)</name>
        <dbReference type="ChEBI" id="CHEBI:29035"/>
    </ligand>
</feature>
<feature type="binding site" evidence="1">
    <location>
        <position position="202"/>
    </location>
    <ligand>
        <name>Mn(2+)</name>
        <dbReference type="ChEBI" id="CHEBI:29035"/>
    </ligand>
</feature>
<feature type="binding site" evidence="1">
    <location>
        <position position="204"/>
    </location>
    <ligand>
        <name>Mn(2+)</name>
        <dbReference type="ChEBI" id="CHEBI:29035"/>
    </ligand>
</feature>
<feature type="binding site" evidence="1">
    <location>
        <position position="238"/>
    </location>
    <ligand>
        <name>Mn(2+)</name>
        <dbReference type="ChEBI" id="CHEBI:29035"/>
    </ligand>
</feature>
<gene>
    <name evidence="1" type="primary">leuA</name>
    <name type="ordered locus">SPAB_00143</name>
</gene>
<evidence type="ECO:0000255" key="1">
    <source>
        <dbReference type="HAMAP-Rule" id="MF_01025"/>
    </source>
</evidence>
<reference key="1">
    <citation type="submission" date="2007-11" db="EMBL/GenBank/DDBJ databases">
        <authorList>
            <consortium name="The Salmonella enterica serovar Paratyphi B Genome Sequencing Project"/>
            <person name="McClelland M."/>
            <person name="Sanderson E.K."/>
            <person name="Porwollik S."/>
            <person name="Spieth J."/>
            <person name="Clifton W.S."/>
            <person name="Fulton R."/>
            <person name="Cordes M."/>
            <person name="Wollam A."/>
            <person name="Shah N."/>
            <person name="Pepin K."/>
            <person name="Bhonagiri V."/>
            <person name="Nash W."/>
            <person name="Johnson M."/>
            <person name="Thiruvilangam P."/>
            <person name="Wilson R."/>
        </authorList>
    </citation>
    <scope>NUCLEOTIDE SEQUENCE [LARGE SCALE GENOMIC DNA]</scope>
    <source>
        <strain>ATCC BAA-1250 / SPB7</strain>
    </source>
</reference>
<dbReference type="EC" id="2.3.3.13" evidence="1"/>
<dbReference type="EMBL" id="CP000886">
    <property type="protein sequence ID" value="ABX65585.1"/>
    <property type="molecule type" value="Genomic_DNA"/>
</dbReference>
<dbReference type="RefSeq" id="WP_000082819.1">
    <property type="nucleotide sequence ID" value="NC_010102.1"/>
</dbReference>
<dbReference type="SMR" id="A9MZK0"/>
<dbReference type="KEGG" id="spq:SPAB_00143"/>
<dbReference type="PATRIC" id="fig|1016998.12.peg.136"/>
<dbReference type="HOGENOM" id="CLU_022158_0_1_6"/>
<dbReference type="BioCyc" id="SENT1016998:SPAB_RS00565-MONOMER"/>
<dbReference type="UniPathway" id="UPA00048">
    <property type="reaction ID" value="UER00070"/>
</dbReference>
<dbReference type="Proteomes" id="UP000008556">
    <property type="component" value="Chromosome"/>
</dbReference>
<dbReference type="GO" id="GO:0005829">
    <property type="term" value="C:cytosol"/>
    <property type="evidence" value="ECO:0007669"/>
    <property type="project" value="TreeGrafter"/>
</dbReference>
<dbReference type="GO" id="GO:0003852">
    <property type="term" value="F:2-isopropylmalate synthase activity"/>
    <property type="evidence" value="ECO:0007669"/>
    <property type="project" value="UniProtKB-UniRule"/>
</dbReference>
<dbReference type="GO" id="GO:0003985">
    <property type="term" value="F:acetyl-CoA C-acetyltransferase activity"/>
    <property type="evidence" value="ECO:0007669"/>
    <property type="project" value="UniProtKB-UniRule"/>
</dbReference>
<dbReference type="GO" id="GO:0030145">
    <property type="term" value="F:manganese ion binding"/>
    <property type="evidence" value="ECO:0007669"/>
    <property type="project" value="UniProtKB-UniRule"/>
</dbReference>
<dbReference type="GO" id="GO:0009098">
    <property type="term" value="P:L-leucine biosynthetic process"/>
    <property type="evidence" value="ECO:0007669"/>
    <property type="project" value="UniProtKB-UniRule"/>
</dbReference>
<dbReference type="CDD" id="cd07940">
    <property type="entry name" value="DRE_TIM_IPMS"/>
    <property type="match status" value="1"/>
</dbReference>
<dbReference type="FunFam" id="1.10.238.260:FF:000001">
    <property type="entry name" value="2-isopropylmalate synthase"/>
    <property type="match status" value="1"/>
</dbReference>
<dbReference type="FunFam" id="3.20.20.70:FF:000010">
    <property type="entry name" value="2-isopropylmalate synthase"/>
    <property type="match status" value="1"/>
</dbReference>
<dbReference type="FunFam" id="3.30.160.270:FF:000001">
    <property type="entry name" value="2-isopropylmalate synthase"/>
    <property type="match status" value="1"/>
</dbReference>
<dbReference type="Gene3D" id="1.10.238.260">
    <property type="match status" value="1"/>
</dbReference>
<dbReference type="Gene3D" id="3.30.160.270">
    <property type="match status" value="1"/>
</dbReference>
<dbReference type="Gene3D" id="3.20.20.70">
    <property type="entry name" value="Aldolase class I"/>
    <property type="match status" value="1"/>
</dbReference>
<dbReference type="HAMAP" id="MF_01025">
    <property type="entry name" value="LeuA_type1"/>
    <property type="match status" value="1"/>
</dbReference>
<dbReference type="InterPro" id="IPR050073">
    <property type="entry name" value="2-IPM_HCS-like"/>
</dbReference>
<dbReference type="InterPro" id="IPR013709">
    <property type="entry name" value="2-isopropylmalate_synth_dimer"/>
</dbReference>
<dbReference type="InterPro" id="IPR002034">
    <property type="entry name" value="AIPM/Hcit_synth_CS"/>
</dbReference>
<dbReference type="InterPro" id="IPR013785">
    <property type="entry name" value="Aldolase_TIM"/>
</dbReference>
<dbReference type="InterPro" id="IPR054691">
    <property type="entry name" value="LeuA/HCS_post-cat"/>
</dbReference>
<dbReference type="InterPro" id="IPR036230">
    <property type="entry name" value="LeuA_allosteric_dom_sf"/>
</dbReference>
<dbReference type="InterPro" id="IPR005671">
    <property type="entry name" value="LeuA_bact_synth"/>
</dbReference>
<dbReference type="InterPro" id="IPR000891">
    <property type="entry name" value="PYR_CT"/>
</dbReference>
<dbReference type="NCBIfam" id="TIGR00973">
    <property type="entry name" value="leuA_bact"/>
    <property type="match status" value="1"/>
</dbReference>
<dbReference type="NCBIfam" id="NF002084">
    <property type="entry name" value="PRK00915.1-1"/>
    <property type="match status" value="1"/>
</dbReference>
<dbReference type="NCBIfam" id="NF002086">
    <property type="entry name" value="PRK00915.1-3"/>
    <property type="match status" value="1"/>
</dbReference>
<dbReference type="PANTHER" id="PTHR10277:SF9">
    <property type="entry name" value="2-ISOPROPYLMALATE SYNTHASE 1, CHLOROPLASTIC-RELATED"/>
    <property type="match status" value="1"/>
</dbReference>
<dbReference type="PANTHER" id="PTHR10277">
    <property type="entry name" value="HOMOCITRATE SYNTHASE-RELATED"/>
    <property type="match status" value="1"/>
</dbReference>
<dbReference type="Pfam" id="PF22617">
    <property type="entry name" value="HCS_D2"/>
    <property type="match status" value="1"/>
</dbReference>
<dbReference type="Pfam" id="PF00682">
    <property type="entry name" value="HMGL-like"/>
    <property type="match status" value="1"/>
</dbReference>
<dbReference type="Pfam" id="PF08502">
    <property type="entry name" value="LeuA_dimer"/>
    <property type="match status" value="1"/>
</dbReference>
<dbReference type="SMART" id="SM00917">
    <property type="entry name" value="LeuA_dimer"/>
    <property type="match status" value="1"/>
</dbReference>
<dbReference type="SUPFAM" id="SSF110921">
    <property type="entry name" value="2-isopropylmalate synthase LeuA, allosteric (dimerisation) domain"/>
    <property type="match status" value="1"/>
</dbReference>
<dbReference type="SUPFAM" id="SSF51569">
    <property type="entry name" value="Aldolase"/>
    <property type="match status" value="1"/>
</dbReference>
<dbReference type="PROSITE" id="PS00815">
    <property type="entry name" value="AIPM_HOMOCIT_SYNTH_1"/>
    <property type="match status" value="1"/>
</dbReference>
<dbReference type="PROSITE" id="PS00816">
    <property type="entry name" value="AIPM_HOMOCIT_SYNTH_2"/>
    <property type="match status" value="1"/>
</dbReference>
<dbReference type="PROSITE" id="PS50991">
    <property type="entry name" value="PYR_CT"/>
    <property type="match status" value="1"/>
</dbReference>
<accession>A9MZK0</accession>
<sequence>MSQQVIIFDTTLRDGEQALQASLSAKEKLQIALALERMGVDVMEVGFPVSSPGDFESVQTIARTIKNSRVCALARCVEKDIDVAAQALKVADAFRIHTFIATSPMHIATKLRSTLDEVIERAVYMVKRARNYTDDVEFSCEDAGRTPVDDLARVVEAAINAGARTINIPDTVGYTMPFEFAGIISGLYERVPNIDKAIISVHTHDDLGIAVGNSLAAVHAGARQVEGAMNGIGERAGNCALEEVIMAIKVRKDIMNVHTNINHHEIWRTSQTVSQICNMPIPANKAIVGSGAFAHSSGIHQDGVLKNRENYEIMTPESIGLNQIQLNLTSRSGRAAVKHRMEEMGYKDTDYNMDHLYDAFLKLADKKGQVFDYDLEALAFINKQQEEPEHFRLDYFSVQSGSSDIATASVKLACGEEIKAEAANGNGPVDAIYQAINRITGYDVELVKYDLNAKGQGKDALGQVDIVVNHHGRRFHGVGLATDIVESSAKAMVHVLNNIWRAAEVEKELQRKAQNKENNKETV</sequence>
<protein>
    <recommendedName>
        <fullName evidence="1">2-isopropylmalate synthase</fullName>
        <ecNumber evidence="1">2.3.3.13</ecNumber>
    </recommendedName>
    <alternativeName>
        <fullName evidence="1">Alpha-IPM synthase</fullName>
    </alternativeName>
    <alternativeName>
        <fullName evidence="1">Alpha-isopropylmalate synthase</fullName>
    </alternativeName>
</protein>
<keyword id="KW-0028">Amino-acid biosynthesis</keyword>
<keyword id="KW-0100">Branched-chain amino acid biosynthesis</keyword>
<keyword id="KW-0963">Cytoplasm</keyword>
<keyword id="KW-0432">Leucine biosynthesis</keyword>
<keyword id="KW-0464">Manganese</keyword>
<keyword id="KW-0479">Metal-binding</keyword>
<keyword id="KW-0808">Transferase</keyword>
<proteinExistence type="inferred from homology"/>
<name>LEU1_SALPB</name>
<comment type="function">
    <text evidence="1">Catalyzes the condensation of the acetyl group of acetyl-CoA with 3-methyl-2-oxobutanoate (2-ketoisovalerate) to form 3-carboxy-3-hydroxy-4-methylpentanoate (2-isopropylmalate).</text>
</comment>
<comment type="catalytic activity">
    <reaction evidence="1">
        <text>3-methyl-2-oxobutanoate + acetyl-CoA + H2O = (2S)-2-isopropylmalate + CoA + H(+)</text>
        <dbReference type="Rhea" id="RHEA:21524"/>
        <dbReference type="ChEBI" id="CHEBI:1178"/>
        <dbReference type="ChEBI" id="CHEBI:11851"/>
        <dbReference type="ChEBI" id="CHEBI:15377"/>
        <dbReference type="ChEBI" id="CHEBI:15378"/>
        <dbReference type="ChEBI" id="CHEBI:57287"/>
        <dbReference type="ChEBI" id="CHEBI:57288"/>
        <dbReference type="EC" id="2.3.3.13"/>
    </reaction>
</comment>
<comment type="cofactor">
    <cofactor evidence="1">
        <name>Mn(2+)</name>
        <dbReference type="ChEBI" id="CHEBI:29035"/>
    </cofactor>
</comment>
<comment type="pathway">
    <text evidence="1">Amino-acid biosynthesis; L-leucine biosynthesis; L-leucine from 3-methyl-2-oxobutanoate: step 1/4.</text>
</comment>
<comment type="subunit">
    <text evidence="1">Homodimer.</text>
</comment>
<comment type="subcellular location">
    <subcellularLocation>
        <location evidence="1">Cytoplasm</location>
    </subcellularLocation>
</comment>
<comment type="similarity">
    <text evidence="1">Belongs to the alpha-IPM synthase/homocitrate synthase family. LeuA type 1 subfamily.</text>
</comment>